<evidence type="ECO:0000250" key="1"/>
<evidence type="ECO:0000255" key="2"/>
<evidence type="ECO:0000305" key="3"/>
<reference key="1">
    <citation type="journal article" date="2003" name="Proc. Natl. Acad. Sci. U.S.A.">
        <title>The complete genome sequence of Mycobacterium bovis.</title>
        <authorList>
            <person name="Garnier T."/>
            <person name="Eiglmeier K."/>
            <person name="Camus J.-C."/>
            <person name="Medina N."/>
            <person name="Mansoor H."/>
            <person name="Pryor M."/>
            <person name="Duthoy S."/>
            <person name="Grondin S."/>
            <person name="Lacroix C."/>
            <person name="Monsempe C."/>
            <person name="Simon S."/>
            <person name="Harris B."/>
            <person name="Atkin R."/>
            <person name="Doggett J."/>
            <person name="Mayes R."/>
            <person name="Keating L."/>
            <person name="Wheeler P.R."/>
            <person name="Parkhill J."/>
            <person name="Barrell B.G."/>
            <person name="Cole S.T."/>
            <person name="Gordon S.V."/>
            <person name="Hewinson R.G."/>
        </authorList>
    </citation>
    <scope>NUCLEOTIDE SEQUENCE [LARGE SCALE GENOMIC DNA]</scope>
    <source>
        <strain>ATCC BAA-935 / AF2122/97</strain>
    </source>
</reference>
<reference key="2">
    <citation type="journal article" date="2017" name="Genome Announc.">
        <title>Updated reference genome sequence and annotation of Mycobacterium bovis AF2122/97.</title>
        <authorList>
            <person name="Malone K.M."/>
            <person name="Farrell D."/>
            <person name="Stuber T.P."/>
            <person name="Schubert O.T."/>
            <person name="Aebersold R."/>
            <person name="Robbe-Austerman S."/>
            <person name="Gordon S.V."/>
        </authorList>
    </citation>
    <scope>NUCLEOTIDE SEQUENCE [LARGE SCALE GENOMIC DNA]</scope>
    <scope>GENOME REANNOTATION</scope>
    <source>
        <strain>ATCC BAA-935 / AF2122/97</strain>
    </source>
</reference>
<organism>
    <name type="scientific">Mycobacterium bovis (strain ATCC BAA-935 / AF2122/97)</name>
    <dbReference type="NCBI Taxonomy" id="233413"/>
    <lineage>
        <taxon>Bacteria</taxon>
        <taxon>Bacillati</taxon>
        <taxon>Actinomycetota</taxon>
        <taxon>Actinomycetes</taxon>
        <taxon>Mycobacteriales</taxon>
        <taxon>Mycobacteriaceae</taxon>
        <taxon>Mycobacterium</taxon>
        <taxon>Mycobacterium tuberculosis complex</taxon>
    </lineage>
</organism>
<gene>
    <name type="primary">recN</name>
    <name type="ordered locus">BQ2027_MB1722</name>
</gene>
<keyword id="KW-0067">ATP-binding</keyword>
<keyword id="KW-0227">DNA damage</keyword>
<keyword id="KW-0234">DNA repair</keyword>
<keyword id="KW-0547">Nucleotide-binding</keyword>
<keyword id="KW-1185">Reference proteome</keyword>
<comment type="function">
    <text evidence="1">May be involved in recombinational repair of damaged DNA.</text>
</comment>
<comment type="similarity">
    <text evidence="3">Belongs to the RecN family.</text>
</comment>
<dbReference type="EMBL" id="LT708304">
    <property type="protein sequence ID" value="SIU00326.1"/>
    <property type="molecule type" value="Genomic_DNA"/>
</dbReference>
<dbReference type="RefSeq" id="NP_855375.1">
    <property type="nucleotide sequence ID" value="NC_002945.3"/>
</dbReference>
<dbReference type="RefSeq" id="WP_003408385.1">
    <property type="nucleotide sequence ID" value="NC_002945.4"/>
</dbReference>
<dbReference type="SMR" id="P0A5U7"/>
<dbReference type="GeneID" id="45425665"/>
<dbReference type="KEGG" id="mbo:BQ2027_MB1722"/>
<dbReference type="PATRIC" id="fig|233413.5.peg.1878"/>
<dbReference type="Proteomes" id="UP000001419">
    <property type="component" value="Chromosome"/>
</dbReference>
<dbReference type="GO" id="GO:0043590">
    <property type="term" value="C:bacterial nucleoid"/>
    <property type="evidence" value="ECO:0007669"/>
    <property type="project" value="TreeGrafter"/>
</dbReference>
<dbReference type="GO" id="GO:0005524">
    <property type="term" value="F:ATP binding"/>
    <property type="evidence" value="ECO:0007669"/>
    <property type="project" value="UniProtKB-KW"/>
</dbReference>
<dbReference type="GO" id="GO:0006310">
    <property type="term" value="P:DNA recombination"/>
    <property type="evidence" value="ECO:0007669"/>
    <property type="project" value="InterPro"/>
</dbReference>
<dbReference type="GO" id="GO:0006281">
    <property type="term" value="P:DNA repair"/>
    <property type="evidence" value="ECO:0007669"/>
    <property type="project" value="UniProtKB-KW"/>
</dbReference>
<dbReference type="GO" id="GO:0009432">
    <property type="term" value="P:SOS response"/>
    <property type="evidence" value="ECO:0007669"/>
    <property type="project" value="TreeGrafter"/>
</dbReference>
<dbReference type="CDD" id="cd03241">
    <property type="entry name" value="ABC_RecN"/>
    <property type="match status" value="2"/>
</dbReference>
<dbReference type="FunFam" id="3.40.50.300:FF:000319">
    <property type="entry name" value="DNA repair protein RecN"/>
    <property type="match status" value="1"/>
</dbReference>
<dbReference type="FunFam" id="3.40.50.300:FF:000356">
    <property type="entry name" value="DNA repair protein RecN"/>
    <property type="match status" value="1"/>
</dbReference>
<dbReference type="Gene3D" id="3.40.50.300">
    <property type="entry name" value="P-loop containing nucleotide triphosphate hydrolases"/>
    <property type="match status" value="2"/>
</dbReference>
<dbReference type="InterPro" id="IPR004604">
    <property type="entry name" value="DNA_recomb/repair_RecN"/>
</dbReference>
<dbReference type="InterPro" id="IPR027417">
    <property type="entry name" value="P-loop_NTPase"/>
</dbReference>
<dbReference type="InterPro" id="IPR003395">
    <property type="entry name" value="RecF/RecN/SMC_N"/>
</dbReference>
<dbReference type="NCBIfam" id="TIGR00634">
    <property type="entry name" value="recN"/>
    <property type="match status" value="1"/>
</dbReference>
<dbReference type="PANTHER" id="PTHR11059">
    <property type="entry name" value="DNA REPAIR PROTEIN RECN"/>
    <property type="match status" value="1"/>
</dbReference>
<dbReference type="PANTHER" id="PTHR11059:SF0">
    <property type="entry name" value="DNA REPAIR PROTEIN RECN"/>
    <property type="match status" value="1"/>
</dbReference>
<dbReference type="Pfam" id="PF02463">
    <property type="entry name" value="SMC_N"/>
    <property type="match status" value="1"/>
</dbReference>
<dbReference type="PIRSF" id="PIRSF003128">
    <property type="entry name" value="RecN"/>
    <property type="match status" value="1"/>
</dbReference>
<dbReference type="SUPFAM" id="SSF52540">
    <property type="entry name" value="P-loop containing nucleoside triphosphate hydrolases"/>
    <property type="match status" value="2"/>
</dbReference>
<protein>
    <recommendedName>
        <fullName>DNA repair protein RecN</fullName>
    </recommendedName>
    <alternativeName>
        <fullName>Recombination protein N</fullName>
    </alternativeName>
</protein>
<accession>P0A5U7</accession>
<accession>A0A1R3XZE7</accession>
<accession>O33197</accession>
<accession>X2BIP1</accession>
<proteinExistence type="inferred from homology"/>
<feature type="chain" id="PRO_0000188023" description="DNA repair protein RecN">
    <location>
        <begin position="1"/>
        <end position="587"/>
    </location>
</feature>
<feature type="binding site" evidence="2">
    <location>
        <begin position="29"/>
        <end position="36"/>
    </location>
    <ligand>
        <name>ATP</name>
        <dbReference type="ChEBI" id="CHEBI:30616"/>
    </ligand>
</feature>
<sequence length="587" mass="62229">MLTELRIESLGAISVATAEFDRGFTVLTGETGTGKTMVVTGLHLLGGARADATRVRSGADRAVVEGRFTTTDLDDATVAGLQAVLDSSGAERDEDGSVIALRSISRDGPSRAYLGGRGVPAKSLSGFTNELLTLHGQNDQLRLMRPDEQRGALDRFAAAGEAVQRYRKLRDAWLTARRDLVDRRNRARELAQEADRLKFALNEIDTVDPQPGEDVALVADIARLSELDTLREAATTARATLCGTPDADAFDRGAVDSLGRARAALQSSDDAALRGLAEQVGEALTVVVDAVAELGAYLDELPADASALDAKLARQAQLRTLTRKYAADIDGVLRWADEARARLAQLDVSEEGLAALERRTGELAHELGQAAVDLSTIRRKAAKRLAKEVSAELSALAMADAEFTIGVTTELADHGDPVALALASGELARAGADGVDAVEFGFVAHRGMTVLPLAKSASGGELSRVMLSLEVVLATSRKQAAGTTMVFDEIDAGVGGWAAVQIGRRLARLARTHQVIVVTHLPQVAAYADVHLMVQRTGRDGASGVRRLTSEDRVAELARMLAGLGDSDSGRAHARELLETAQNDELT</sequence>
<name>RECN_MYCBO</name>